<accession>Q65I16</accession>
<accession>Q62TG4</accession>
<sequence>MTKVSILGAGSWGTALALVLADNQYDVCIWGHREELIQQINEHHENKDYLPGVKLSENVRATTDLEAAVADVKTIIVAVPTKAIREVLAQAVSFINQKAIFVHVSKGIEPDTLLRISEMMKEEIPAELREDIVVLSGPSHAEEVGLRHPTTVTVSADSSIESAQAIQDMFMNQNFRVYTNPDMIGVEIGGALKNVIALAAGITDGLGYGDNAKAALITRGLAEIARLGTKMGGNPLTFSGLTGIGDLIVTCTSVHSRNWRAGNMLGKGFKLDEVLEEMGMVVEGVRTTKAAYQLSKKFDVKMPITEALHKVLFDGEKVETAVESLMARVKTHEMEDLVNTFENQMK</sequence>
<organism>
    <name type="scientific">Bacillus licheniformis (strain ATCC 14580 / DSM 13 / JCM 2505 / CCUG 7422 / NBRC 12200 / NCIMB 9375 / NCTC 10341 / NRRL NRS-1264 / Gibson 46)</name>
    <dbReference type="NCBI Taxonomy" id="279010"/>
    <lineage>
        <taxon>Bacteria</taxon>
        <taxon>Bacillati</taxon>
        <taxon>Bacillota</taxon>
        <taxon>Bacilli</taxon>
        <taxon>Bacillales</taxon>
        <taxon>Bacillaceae</taxon>
        <taxon>Bacillus</taxon>
    </lineage>
</organism>
<gene>
    <name evidence="1" type="primary">gpsA</name>
    <name type="ordered locus">BLi02420</name>
    <name type="ordered locus">BL02791</name>
</gene>
<comment type="function">
    <text evidence="1">Catalyzes the reduction of the glycolytic intermediate dihydroxyacetone phosphate (DHAP) to sn-glycerol 3-phosphate (G3P), the key precursor for phospholipid synthesis.</text>
</comment>
<comment type="catalytic activity">
    <reaction evidence="1">
        <text>sn-glycerol 3-phosphate + NAD(+) = dihydroxyacetone phosphate + NADH + H(+)</text>
        <dbReference type="Rhea" id="RHEA:11092"/>
        <dbReference type="ChEBI" id="CHEBI:15378"/>
        <dbReference type="ChEBI" id="CHEBI:57540"/>
        <dbReference type="ChEBI" id="CHEBI:57597"/>
        <dbReference type="ChEBI" id="CHEBI:57642"/>
        <dbReference type="ChEBI" id="CHEBI:57945"/>
        <dbReference type="EC" id="1.1.1.94"/>
    </reaction>
    <physiologicalReaction direction="right-to-left" evidence="1">
        <dbReference type="Rhea" id="RHEA:11094"/>
    </physiologicalReaction>
</comment>
<comment type="catalytic activity">
    <reaction evidence="1">
        <text>sn-glycerol 3-phosphate + NADP(+) = dihydroxyacetone phosphate + NADPH + H(+)</text>
        <dbReference type="Rhea" id="RHEA:11096"/>
        <dbReference type="ChEBI" id="CHEBI:15378"/>
        <dbReference type="ChEBI" id="CHEBI:57597"/>
        <dbReference type="ChEBI" id="CHEBI:57642"/>
        <dbReference type="ChEBI" id="CHEBI:57783"/>
        <dbReference type="ChEBI" id="CHEBI:58349"/>
        <dbReference type="EC" id="1.1.1.94"/>
    </reaction>
    <physiologicalReaction direction="right-to-left" evidence="1">
        <dbReference type="Rhea" id="RHEA:11098"/>
    </physiologicalReaction>
</comment>
<comment type="pathway">
    <text evidence="1">Membrane lipid metabolism; glycerophospholipid metabolism.</text>
</comment>
<comment type="subcellular location">
    <subcellularLocation>
        <location evidence="1">Cytoplasm</location>
    </subcellularLocation>
</comment>
<comment type="similarity">
    <text evidence="1">Belongs to the NAD-dependent glycerol-3-phosphate dehydrogenase family.</text>
</comment>
<feature type="chain" id="PRO_0000255282" description="Glycerol-3-phosphate dehydrogenase [NAD(P)+]">
    <location>
        <begin position="1"/>
        <end position="346"/>
    </location>
</feature>
<feature type="active site" description="Proton acceptor" evidence="1">
    <location>
        <position position="193"/>
    </location>
</feature>
<feature type="binding site" evidence="1">
    <location>
        <position position="11"/>
    </location>
    <ligand>
        <name>NADPH</name>
        <dbReference type="ChEBI" id="CHEBI:57783"/>
    </ligand>
</feature>
<feature type="binding site" evidence="1">
    <location>
        <position position="12"/>
    </location>
    <ligand>
        <name>NADPH</name>
        <dbReference type="ChEBI" id="CHEBI:57783"/>
    </ligand>
</feature>
<feature type="binding site" evidence="1">
    <location>
        <position position="32"/>
    </location>
    <ligand>
        <name>NADPH</name>
        <dbReference type="ChEBI" id="CHEBI:57783"/>
    </ligand>
</feature>
<feature type="binding site" evidence="1">
    <location>
        <position position="33"/>
    </location>
    <ligand>
        <name>NADPH</name>
        <dbReference type="ChEBI" id="CHEBI:57783"/>
    </ligand>
</feature>
<feature type="binding site" evidence="1">
    <location>
        <position position="106"/>
    </location>
    <ligand>
        <name>NADPH</name>
        <dbReference type="ChEBI" id="CHEBI:57783"/>
    </ligand>
</feature>
<feature type="binding site" evidence="1">
    <location>
        <position position="106"/>
    </location>
    <ligand>
        <name>sn-glycerol 3-phosphate</name>
        <dbReference type="ChEBI" id="CHEBI:57597"/>
    </ligand>
</feature>
<feature type="binding site" evidence="1">
    <location>
        <position position="137"/>
    </location>
    <ligand>
        <name>sn-glycerol 3-phosphate</name>
        <dbReference type="ChEBI" id="CHEBI:57597"/>
    </ligand>
</feature>
<feature type="binding site" evidence="1">
    <location>
        <position position="139"/>
    </location>
    <ligand>
        <name>sn-glycerol 3-phosphate</name>
        <dbReference type="ChEBI" id="CHEBI:57597"/>
    </ligand>
</feature>
<feature type="binding site" evidence="1">
    <location>
        <position position="141"/>
    </location>
    <ligand>
        <name>NADPH</name>
        <dbReference type="ChEBI" id="CHEBI:57783"/>
    </ligand>
</feature>
<feature type="binding site" evidence="1">
    <location>
        <position position="193"/>
    </location>
    <ligand>
        <name>sn-glycerol 3-phosphate</name>
        <dbReference type="ChEBI" id="CHEBI:57597"/>
    </ligand>
</feature>
<feature type="binding site" evidence="1">
    <location>
        <position position="246"/>
    </location>
    <ligand>
        <name>sn-glycerol 3-phosphate</name>
        <dbReference type="ChEBI" id="CHEBI:57597"/>
    </ligand>
</feature>
<feature type="binding site" evidence="1">
    <location>
        <position position="256"/>
    </location>
    <ligand>
        <name>sn-glycerol 3-phosphate</name>
        <dbReference type="ChEBI" id="CHEBI:57597"/>
    </ligand>
</feature>
<feature type="binding site" evidence="1">
    <location>
        <position position="257"/>
    </location>
    <ligand>
        <name>NADPH</name>
        <dbReference type="ChEBI" id="CHEBI:57783"/>
    </ligand>
</feature>
<feature type="binding site" evidence="1">
    <location>
        <position position="257"/>
    </location>
    <ligand>
        <name>sn-glycerol 3-phosphate</name>
        <dbReference type="ChEBI" id="CHEBI:57597"/>
    </ligand>
</feature>
<feature type="binding site" evidence="1">
    <location>
        <position position="258"/>
    </location>
    <ligand>
        <name>sn-glycerol 3-phosphate</name>
        <dbReference type="ChEBI" id="CHEBI:57597"/>
    </ligand>
</feature>
<feature type="binding site" evidence="1">
    <location>
        <position position="281"/>
    </location>
    <ligand>
        <name>NADPH</name>
        <dbReference type="ChEBI" id="CHEBI:57783"/>
    </ligand>
</feature>
<feature type="binding site" evidence="1">
    <location>
        <position position="283"/>
    </location>
    <ligand>
        <name>NADPH</name>
        <dbReference type="ChEBI" id="CHEBI:57783"/>
    </ligand>
</feature>
<evidence type="ECO:0000255" key="1">
    <source>
        <dbReference type="HAMAP-Rule" id="MF_00394"/>
    </source>
</evidence>
<dbReference type="EC" id="1.1.1.94" evidence="1"/>
<dbReference type="EMBL" id="AE017333">
    <property type="protein sequence ID" value="AAU41298.1"/>
    <property type="molecule type" value="Genomic_DNA"/>
</dbReference>
<dbReference type="EMBL" id="CP000002">
    <property type="protein sequence ID" value="AAU23945.1"/>
    <property type="molecule type" value="Genomic_DNA"/>
</dbReference>
<dbReference type="RefSeq" id="WP_003183015.1">
    <property type="nucleotide sequence ID" value="NC_006322.1"/>
</dbReference>
<dbReference type="SMR" id="Q65I16"/>
<dbReference type="STRING" id="279010.BL02791"/>
<dbReference type="KEGG" id="bld:BLi02420"/>
<dbReference type="KEGG" id="bli:BL02791"/>
<dbReference type="eggNOG" id="COG0240">
    <property type="taxonomic scope" value="Bacteria"/>
</dbReference>
<dbReference type="HOGENOM" id="CLU_033449_0_2_9"/>
<dbReference type="UniPathway" id="UPA00940"/>
<dbReference type="Proteomes" id="UP000000606">
    <property type="component" value="Chromosome"/>
</dbReference>
<dbReference type="Bgee" id="BL02791">
    <property type="expression patterns" value="Expressed in testis and 2 other cell types or tissues"/>
</dbReference>
<dbReference type="GO" id="GO:0005829">
    <property type="term" value="C:cytosol"/>
    <property type="evidence" value="ECO:0007669"/>
    <property type="project" value="TreeGrafter"/>
</dbReference>
<dbReference type="GO" id="GO:0047952">
    <property type="term" value="F:glycerol-3-phosphate dehydrogenase [NAD(P)+] activity"/>
    <property type="evidence" value="ECO:0007669"/>
    <property type="project" value="UniProtKB-UniRule"/>
</dbReference>
<dbReference type="GO" id="GO:0051287">
    <property type="term" value="F:NAD binding"/>
    <property type="evidence" value="ECO:0007669"/>
    <property type="project" value="InterPro"/>
</dbReference>
<dbReference type="GO" id="GO:0005975">
    <property type="term" value="P:carbohydrate metabolic process"/>
    <property type="evidence" value="ECO:0007669"/>
    <property type="project" value="InterPro"/>
</dbReference>
<dbReference type="GO" id="GO:0046167">
    <property type="term" value="P:glycerol-3-phosphate biosynthetic process"/>
    <property type="evidence" value="ECO:0007669"/>
    <property type="project" value="UniProtKB-UniRule"/>
</dbReference>
<dbReference type="GO" id="GO:0046168">
    <property type="term" value="P:glycerol-3-phosphate catabolic process"/>
    <property type="evidence" value="ECO:0007669"/>
    <property type="project" value="InterPro"/>
</dbReference>
<dbReference type="GO" id="GO:0006650">
    <property type="term" value="P:glycerophospholipid metabolic process"/>
    <property type="evidence" value="ECO:0007669"/>
    <property type="project" value="UniProtKB-UniRule"/>
</dbReference>
<dbReference type="GO" id="GO:0008654">
    <property type="term" value="P:phospholipid biosynthetic process"/>
    <property type="evidence" value="ECO:0007669"/>
    <property type="project" value="UniProtKB-KW"/>
</dbReference>
<dbReference type="FunFam" id="1.10.1040.10:FF:000001">
    <property type="entry name" value="Glycerol-3-phosphate dehydrogenase [NAD(P)+]"/>
    <property type="match status" value="1"/>
</dbReference>
<dbReference type="FunFam" id="3.40.50.720:FF:000019">
    <property type="entry name" value="Glycerol-3-phosphate dehydrogenase [NAD(P)+]"/>
    <property type="match status" value="1"/>
</dbReference>
<dbReference type="Gene3D" id="1.10.1040.10">
    <property type="entry name" value="N-(1-d-carboxylethyl)-l-norvaline Dehydrogenase, domain 2"/>
    <property type="match status" value="1"/>
</dbReference>
<dbReference type="Gene3D" id="3.40.50.720">
    <property type="entry name" value="NAD(P)-binding Rossmann-like Domain"/>
    <property type="match status" value="1"/>
</dbReference>
<dbReference type="HAMAP" id="MF_00394">
    <property type="entry name" value="NAD_Glyc3P_dehydrog"/>
    <property type="match status" value="1"/>
</dbReference>
<dbReference type="InterPro" id="IPR008927">
    <property type="entry name" value="6-PGluconate_DH-like_C_sf"/>
</dbReference>
<dbReference type="InterPro" id="IPR013328">
    <property type="entry name" value="6PGD_dom2"/>
</dbReference>
<dbReference type="InterPro" id="IPR006168">
    <property type="entry name" value="G3P_DH_NAD-dep"/>
</dbReference>
<dbReference type="InterPro" id="IPR006109">
    <property type="entry name" value="G3P_DH_NAD-dep_C"/>
</dbReference>
<dbReference type="InterPro" id="IPR011128">
    <property type="entry name" value="G3P_DH_NAD-dep_N"/>
</dbReference>
<dbReference type="InterPro" id="IPR036291">
    <property type="entry name" value="NAD(P)-bd_dom_sf"/>
</dbReference>
<dbReference type="NCBIfam" id="NF000940">
    <property type="entry name" value="PRK00094.1-2"/>
    <property type="match status" value="1"/>
</dbReference>
<dbReference type="NCBIfam" id="NF000941">
    <property type="entry name" value="PRK00094.1-3"/>
    <property type="match status" value="1"/>
</dbReference>
<dbReference type="NCBIfam" id="NF000942">
    <property type="entry name" value="PRK00094.1-4"/>
    <property type="match status" value="1"/>
</dbReference>
<dbReference type="PANTHER" id="PTHR11728">
    <property type="entry name" value="GLYCEROL-3-PHOSPHATE DEHYDROGENASE"/>
    <property type="match status" value="1"/>
</dbReference>
<dbReference type="PANTHER" id="PTHR11728:SF1">
    <property type="entry name" value="GLYCEROL-3-PHOSPHATE DEHYDROGENASE [NAD(+)] 2, CHLOROPLASTIC"/>
    <property type="match status" value="1"/>
</dbReference>
<dbReference type="Pfam" id="PF07479">
    <property type="entry name" value="NAD_Gly3P_dh_C"/>
    <property type="match status" value="1"/>
</dbReference>
<dbReference type="Pfam" id="PF01210">
    <property type="entry name" value="NAD_Gly3P_dh_N"/>
    <property type="match status" value="1"/>
</dbReference>
<dbReference type="PIRSF" id="PIRSF000114">
    <property type="entry name" value="Glycerol-3-P_dh"/>
    <property type="match status" value="1"/>
</dbReference>
<dbReference type="PRINTS" id="PR00077">
    <property type="entry name" value="GPDHDRGNASE"/>
</dbReference>
<dbReference type="SUPFAM" id="SSF48179">
    <property type="entry name" value="6-phosphogluconate dehydrogenase C-terminal domain-like"/>
    <property type="match status" value="1"/>
</dbReference>
<dbReference type="SUPFAM" id="SSF51735">
    <property type="entry name" value="NAD(P)-binding Rossmann-fold domains"/>
    <property type="match status" value="1"/>
</dbReference>
<dbReference type="PROSITE" id="PS00957">
    <property type="entry name" value="NAD_G3PDH"/>
    <property type="match status" value="1"/>
</dbReference>
<reference key="1">
    <citation type="journal article" date="2004" name="J. Mol. Microbiol. Biotechnol.">
        <title>The complete genome sequence of Bacillus licheniformis DSM13, an organism with great industrial potential.</title>
        <authorList>
            <person name="Veith B."/>
            <person name="Herzberg C."/>
            <person name="Steckel S."/>
            <person name="Feesche J."/>
            <person name="Maurer K.H."/>
            <person name="Ehrenreich P."/>
            <person name="Baeumer S."/>
            <person name="Henne A."/>
            <person name="Liesegang H."/>
            <person name="Merkl R."/>
            <person name="Ehrenreich A."/>
            <person name="Gottschalk G."/>
        </authorList>
    </citation>
    <scope>NUCLEOTIDE SEQUENCE [LARGE SCALE GENOMIC DNA]</scope>
    <source>
        <strain>ATCC 14580 / DSM 13 / JCM 2505 / CCUG 7422 / NBRC 12200 / NCIMB 9375 / NCTC 10341 / NRRL NRS-1264 / Gibson 46</strain>
    </source>
</reference>
<reference key="2">
    <citation type="journal article" date="2004" name="Genome Biol.">
        <title>Complete genome sequence of the industrial bacterium Bacillus licheniformis and comparisons with closely related Bacillus species.</title>
        <authorList>
            <person name="Rey M.W."/>
            <person name="Ramaiya P."/>
            <person name="Nelson B.A."/>
            <person name="Brody-Karpin S.D."/>
            <person name="Zaretsky E.J."/>
            <person name="Tang M."/>
            <person name="Lopez de Leon A."/>
            <person name="Xiang H."/>
            <person name="Gusti V."/>
            <person name="Clausen I.G."/>
            <person name="Olsen P.B."/>
            <person name="Rasmussen M.D."/>
            <person name="Andersen J.T."/>
            <person name="Joergensen P.L."/>
            <person name="Larsen T.S."/>
            <person name="Sorokin A."/>
            <person name="Bolotin A."/>
            <person name="Lapidus A."/>
            <person name="Galleron N."/>
            <person name="Ehrlich S.D."/>
            <person name="Berka R.M."/>
        </authorList>
    </citation>
    <scope>NUCLEOTIDE SEQUENCE [LARGE SCALE GENOMIC DNA]</scope>
    <source>
        <strain>ATCC 14580 / DSM 13 / JCM 2505 / CCUG 7422 / NBRC 12200 / NCIMB 9375 / NCTC 10341 / NRRL NRS-1264 / Gibson 46</strain>
    </source>
</reference>
<proteinExistence type="inferred from homology"/>
<keyword id="KW-0963">Cytoplasm</keyword>
<keyword id="KW-0444">Lipid biosynthesis</keyword>
<keyword id="KW-0443">Lipid metabolism</keyword>
<keyword id="KW-0520">NAD</keyword>
<keyword id="KW-0521">NADP</keyword>
<keyword id="KW-0547">Nucleotide-binding</keyword>
<keyword id="KW-0560">Oxidoreductase</keyword>
<keyword id="KW-0594">Phospholipid biosynthesis</keyword>
<keyword id="KW-1208">Phospholipid metabolism</keyword>
<keyword id="KW-1185">Reference proteome</keyword>
<protein>
    <recommendedName>
        <fullName evidence="1">Glycerol-3-phosphate dehydrogenase [NAD(P)+]</fullName>
        <ecNumber evidence="1">1.1.1.94</ecNumber>
    </recommendedName>
    <alternativeName>
        <fullName evidence="1">NAD(P)(+)-dependent glycerol-3-phosphate dehydrogenase</fullName>
    </alternativeName>
    <alternativeName>
        <fullName evidence="1">NAD(P)H-dependent dihydroxyacetone-phosphate reductase</fullName>
    </alternativeName>
</protein>
<name>GPDA_BACLD</name>